<keyword id="KW-0007">Acetylation</keyword>
<keyword id="KW-0020">Allergen</keyword>
<keyword id="KW-0106">Calcium</keyword>
<keyword id="KW-0903">Direct protein sequencing</keyword>
<keyword id="KW-0479">Metal-binding</keyword>
<keyword id="KW-0514">Muscle protein</keyword>
<keyword id="KW-0677">Repeat</keyword>
<name>PRVB2_MERBI</name>
<protein>
    <recommendedName>
        <fullName evidence="7">Parvalbumin beta 2</fullName>
    </recommendedName>
</protein>
<dbReference type="SMR" id="P86752"/>
<dbReference type="iPTMnet" id="P86752"/>
<dbReference type="GO" id="GO:0005737">
    <property type="term" value="C:cytoplasm"/>
    <property type="evidence" value="ECO:0007669"/>
    <property type="project" value="TreeGrafter"/>
</dbReference>
<dbReference type="GO" id="GO:0005509">
    <property type="term" value="F:calcium ion binding"/>
    <property type="evidence" value="ECO:0007669"/>
    <property type="project" value="InterPro"/>
</dbReference>
<dbReference type="FunFam" id="1.10.238.10:FF:000060">
    <property type="entry name" value="Parvalbumin, thymic"/>
    <property type="match status" value="1"/>
</dbReference>
<dbReference type="Gene3D" id="1.10.238.10">
    <property type="entry name" value="EF-hand"/>
    <property type="match status" value="1"/>
</dbReference>
<dbReference type="InterPro" id="IPR011992">
    <property type="entry name" value="EF-hand-dom_pair"/>
</dbReference>
<dbReference type="InterPro" id="IPR018247">
    <property type="entry name" value="EF_Hand_1_Ca_BS"/>
</dbReference>
<dbReference type="InterPro" id="IPR002048">
    <property type="entry name" value="EF_hand_dom"/>
</dbReference>
<dbReference type="InterPro" id="IPR008080">
    <property type="entry name" value="Parvalbumin"/>
</dbReference>
<dbReference type="PANTHER" id="PTHR11653:SF12">
    <property type="entry name" value="PARVALBUMIN"/>
    <property type="match status" value="1"/>
</dbReference>
<dbReference type="PANTHER" id="PTHR11653">
    <property type="entry name" value="PARVALBUMIN ALPHA"/>
    <property type="match status" value="1"/>
</dbReference>
<dbReference type="Pfam" id="PF13499">
    <property type="entry name" value="EF-hand_7"/>
    <property type="match status" value="1"/>
</dbReference>
<dbReference type="PRINTS" id="PR01697">
    <property type="entry name" value="PARVALBUMIN"/>
</dbReference>
<dbReference type="SUPFAM" id="SSF47473">
    <property type="entry name" value="EF-hand"/>
    <property type="match status" value="1"/>
</dbReference>
<dbReference type="PROSITE" id="PS00018">
    <property type="entry name" value="EF_HAND_1"/>
    <property type="match status" value="2"/>
</dbReference>
<dbReference type="PROSITE" id="PS50222">
    <property type="entry name" value="EF_HAND_2"/>
    <property type="match status" value="2"/>
</dbReference>
<comment type="function">
    <text evidence="2 3">In muscle, parvalbumin is thought to be involved in relaxation after contraction. It binds two calcium ions (By similarity).</text>
</comment>
<comment type="mass spectrometry" mass="11271.685" error="0.0209" method="Electrospray" evidence="6"/>
<comment type="miscellaneous">
    <text evidence="2 6">Is regarded as an important allergen.</text>
</comment>
<comment type="miscellaneous">
    <text evidence="6">On the 2D-gel the determined pI of this protein is: 4.23, its MW is: 11.35 kDa.</text>
</comment>
<comment type="similarity">
    <text evidence="4">Belongs to the parvalbumin family.</text>
</comment>
<reference evidence="8" key="1">
    <citation type="journal article" date="2010" name="J. Proteome Res.">
        <title>Extensive de novo sequencing of new parvalbumin isoforms using a novel combination of bottom-up proteomics, accurate molecular mass measurement by FTICR-MS, and selected MS/MS ion monitoring.</title>
        <authorList>
            <person name="Carrera M."/>
            <person name="Canas B."/>
            <person name="Vazquez J."/>
            <person name="Gallardo J.M."/>
        </authorList>
    </citation>
    <scope>PROTEIN SEQUENCE</scope>
    <scope>MASS SPECTROMETRY</scope>
    <scope>ACETYLATION AT ALA-1</scope>
    <source>
        <tissue evidence="6">Muscle</tissue>
    </source>
</reference>
<organism>
    <name type="scientific">Merluccius bilinearis</name>
    <name type="common">Silver hake</name>
    <dbReference type="NCBI Taxonomy" id="79698"/>
    <lineage>
        <taxon>Eukaryota</taxon>
        <taxon>Metazoa</taxon>
        <taxon>Chordata</taxon>
        <taxon>Craniata</taxon>
        <taxon>Vertebrata</taxon>
        <taxon>Euteleostomi</taxon>
        <taxon>Actinopterygii</taxon>
        <taxon>Neopterygii</taxon>
        <taxon>Teleostei</taxon>
        <taxon>Neoteleostei</taxon>
        <taxon>Acanthomorphata</taxon>
        <taxon>Zeiogadaria</taxon>
        <taxon>Gadariae</taxon>
        <taxon>Gadiformes</taxon>
        <taxon>Gadoidei</taxon>
        <taxon>Merlucciidae</taxon>
        <taxon>Merluccius</taxon>
    </lineage>
</organism>
<evidence type="ECO:0000250" key="1">
    <source>
        <dbReference type="UniProtKB" id="P02621"/>
    </source>
</evidence>
<evidence type="ECO:0000250" key="2">
    <source>
        <dbReference type="UniProtKB" id="P02622"/>
    </source>
</evidence>
<evidence type="ECO:0000250" key="3">
    <source>
        <dbReference type="UniProtKB" id="P02624"/>
    </source>
</evidence>
<evidence type="ECO:0000255" key="4"/>
<evidence type="ECO:0000255" key="5">
    <source>
        <dbReference type="PROSITE-ProRule" id="PRU00448"/>
    </source>
</evidence>
<evidence type="ECO:0000269" key="6">
    <source>
    </source>
</evidence>
<evidence type="ECO:0000303" key="7">
    <source>
    </source>
</evidence>
<evidence type="ECO:0000305" key="8"/>
<sequence length="108" mass="11237">AFAGILADADIAAALAACKAEGSFKHGEYFAKIGLKGKSAADIKKVFGIIDQDKSDFVEEDELKLFLQNFSAGARALTDAETATFLKAGDSDGDGKIGVDEFAAMVKG</sequence>
<accession>P86752</accession>
<feature type="chain" id="PRO_0000399412" description="Parvalbumin beta 2">
    <location>
        <begin position="1"/>
        <end position="108"/>
    </location>
</feature>
<feature type="domain" description="EF-hand 1" evidence="5">
    <location>
        <begin position="38"/>
        <end position="73"/>
    </location>
</feature>
<feature type="domain" description="EF-hand 2" evidence="5">
    <location>
        <begin position="77"/>
        <end position="108"/>
    </location>
</feature>
<feature type="binding site" evidence="1 5">
    <location>
        <position position="51"/>
    </location>
    <ligand>
        <name>Ca(2+)</name>
        <dbReference type="ChEBI" id="CHEBI:29108"/>
        <label>1</label>
    </ligand>
</feature>
<feature type="binding site" evidence="1 5">
    <location>
        <position position="53"/>
    </location>
    <ligand>
        <name>Ca(2+)</name>
        <dbReference type="ChEBI" id="CHEBI:29108"/>
        <label>1</label>
    </ligand>
</feature>
<feature type="binding site" evidence="1 5">
    <location>
        <position position="55"/>
    </location>
    <ligand>
        <name>Ca(2+)</name>
        <dbReference type="ChEBI" id="CHEBI:29108"/>
        <label>1</label>
    </ligand>
</feature>
<feature type="binding site" evidence="1">
    <location>
        <position position="57"/>
    </location>
    <ligand>
        <name>Ca(2+)</name>
        <dbReference type="ChEBI" id="CHEBI:29108"/>
        <label>1</label>
    </ligand>
</feature>
<feature type="binding site" evidence="1">
    <location>
        <position position="59"/>
    </location>
    <ligand>
        <name>Ca(2+)</name>
        <dbReference type="ChEBI" id="CHEBI:29108"/>
        <label>1</label>
    </ligand>
</feature>
<feature type="binding site" evidence="1 5">
    <location>
        <position position="62"/>
    </location>
    <ligand>
        <name>Ca(2+)</name>
        <dbReference type="ChEBI" id="CHEBI:29108"/>
        <label>1</label>
    </ligand>
</feature>
<feature type="binding site" evidence="1 5">
    <location>
        <position position="90"/>
    </location>
    <ligand>
        <name>Ca(2+)</name>
        <dbReference type="ChEBI" id="CHEBI:29108"/>
        <label>2</label>
    </ligand>
</feature>
<feature type="binding site" evidence="1 5">
    <location>
        <position position="92"/>
    </location>
    <ligand>
        <name>Ca(2+)</name>
        <dbReference type="ChEBI" id="CHEBI:29108"/>
        <label>2</label>
    </ligand>
</feature>
<feature type="binding site" evidence="1 5">
    <location>
        <position position="94"/>
    </location>
    <ligand>
        <name>Ca(2+)</name>
        <dbReference type="ChEBI" id="CHEBI:29108"/>
        <label>2</label>
    </ligand>
</feature>
<feature type="binding site" evidence="5">
    <location>
        <position position="96"/>
    </location>
    <ligand>
        <name>Ca(2+)</name>
        <dbReference type="ChEBI" id="CHEBI:29108"/>
        <label>2</label>
    </ligand>
</feature>
<feature type="binding site" evidence="1 5">
    <location>
        <position position="101"/>
    </location>
    <ligand>
        <name>Ca(2+)</name>
        <dbReference type="ChEBI" id="CHEBI:29108"/>
        <label>2</label>
    </ligand>
</feature>
<feature type="modified residue" description="N-acetylalanine" evidence="6">
    <location>
        <position position="1"/>
    </location>
</feature>
<feature type="unsure residue" description="I or L" evidence="6">
    <location>
        <position position="5"/>
    </location>
</feature>
<feature type="unsure residue" description="L or I" evidence="6">
    <location>
        <position position="6"/>
    </location>
</feature>
<feature type="unsure residue" description="I or L" evidence="6">
    <location>
        <position position="11"/>
    </location>
</feature>
<feature type="unsure residue" description="L or I" evidence="6">
    <location>
        <position position="15"/>
    </location>
</feature>
<feature type="unsure residue" description="K or Q" evidence="6">
    <location>
        <position position="19"/>
    </location>
</feature>
<feature type="unsure residue" description="K or Q" evidence="6">
    <location>
        <position position="25"/>
    </location>
</feature>
<feature type="unsure residue" description="K or Q" evidence="6">
    <location>
        <position position="32"/>
    </location>
</feature>
<feature type="unsure residue" description="I or L" evidence="6">
    <location>
        <position position="33"/>
    </location>
</feature>
<feature type="unsure residue" description="L or I" evidence="6">
    <location>
        <position position="35"/>
    </location>
</feature>
<feature type="unsure residue" description="K or Q" evidence="6">
    <location>
        <position position="36"/>
    </location>
</feature>
<feature type="unsure residue" description="K or Q" evidence="6">
    <location>
        <position position="38"/>
    </location>
</feature>
<feature type="unsure residue" description="I or L" evidence="6">
    <location>
        <position position="43"/>
    </location>
</feature>
<feature type="unsure residue" description="K or Q" evidence="6">
    <location>
        <position position="44"/>
    </location>
</feature>
<feature type="unsure residue" description="K or Q" evidence="6">
    <location>
        <position position="45"/>
    </location>
</feature>
<feature type="unsure residue" description="I or L" evidence="6">
    <location>
        <position position="49"/>
    </location>
</feature>
<feature type="unsure residue" description="I or L" evidence="6">
    <location>
        <position position="50"/>
    </location>
</feature>
<feature type="unsure residue" description="Q or K" evidence="6">
    <location>
        <position position="52"/>
    </location>
</feature>
<feature type="unsure residue" description="K or Q" evidence="6">
    <location>
        <position position="54"/>
    </location>
</feature>
<feature type="unsure residue" description="L or I" evidence="6">
    <location>
        <position position="63"/>
    </location>
</feature>
<feature type="unsure residue" description="K or Q" evidence="6">
    <location>
        <position position="64"/>
    </location>
</feature>
<feature type="unsure residue" description="L or I" evidence="6">
    <location>
        <position position="65"/>
    </location>
</feature>
<feature type="unsure residue" description="L or I" evidence="6">
    <location>
        <position position="67"/>
    </location>
</feature>
<feature type="unsure residue" description="Q or K" evidence="6">
    <location>
        <position position="68"/>
    </location>
</feature>
<feature type="unsure residue" description="L or I" evidence="6">
    <location>
        <position position="77"/>
    </location>
</feature>
<feature type="unsure residue" description="L or I" evidence="6">
    <location>
        <position position="86"/>
    </location>
</feature>
<feature type="unsure residue" description="K or Q" evidence="6">
    <location>
        <position position="87"/>
    </location>
</feature>
<feature type="unsure residue" description="K or Q" evidence="6">
    <location>
        <position position="96"/>
    </location>
</feature>
<feature type="unsure residue" description="I or L" evidence="6">
    <location>
        <position position="97"/>
    </location>
</feature>
<feature type="unsure residue" description="K or Q" evidence="6">
    <location>
        <position position="107"/>
    </location>
</feature>
<proteinExistence type="evidence at protein level"/>